<dbReference type="EMBL" id="U12962">
    <property type="protein sequence ID" value="AAA67879.1"/>
    <property type="molecule type" value="Genomic_DNA"/>
</dbReference>
<dbReference type="EMBL" id="Z83337">
    <property type="protein sequence ID" value="CAB05950.1"/>
    <property type="molecule type" value="Genomic_DNA"/>
</dbReference>
<dbReference type="EMBL" id="AL009126">
    <property type="protein sequence ID" value="CAB15657.1"/>
    <property type="molecule type" value="Genomic_DNA"/>
</dbReference>
<dbReference type="PIR" id="F69623">
    <property type="entry name" value="F69623"/>
</dbReference>
<dbReference type="RefSeq" id="NP_391521.1">
    <property type="nucleotide sequence ID" value="NC_000964.3"/>
</dbReference>
<dbReference type="RefSeq" id="WP_003244097.1">
    <property type="nucleotide sequence ID" value="NZ_OZ025638.1"/>
</dbReference>
<dbReference type="SMR" id="P39752"/>
<dbReference type="FunCoup" id="P39752">
    <property type="interactions" value="73"/>
</dbReference>
<dbReference type="STRING" id="224308.BSU36400"/>
<dbReference type="PaxDb" id="224308-BSU36400"/>
<dbReference type="EnsemblBacteria" id="CAB15657">
    <property type="protein sequence ID" value="CAB15657"/>
    <property type="gene ID" value="BSU_36400"/>
</dbReference>
<dbReference type="GeneID" id="936927"/>
<dbReference type="KEGG" id="bsu:BSU36400"/>
<dbReference type="PATRIC" id="fig|224308.179.peg.3940"/>
<dbReference type="eggNOG" id="COG4786">
    <property type="taxonomic scope" value="Bacteria"/>
</dbReference>
<dbReference type="InParanoid" id="P39752"/>
<dbReference type="OrthoDB" id="9800375at2"/>
<dbReference type="PhylomeDB" id="P39752"/>
<dbReference type="BioCyc" id="BSUB:BSU36400-MONOMER"/>
<dbReference type="Proteomes" id="UP000001570">
    <property type="component" value="Chromosome"/>
</dbReference>
<dbReference type="GO" id="GO:0009288">
    <property type="term" value="C:bacterial-type flagellum"/>
    <property type="evidence" value="ECO:0000318"/>
    <property type="project" value="GO_Central"/>
</dbReference>
<dbReference type="GO" id="GO:0044781">
    <property type="term" value="P:bacterial-type flagellum organization"/>
    <property type="evidence" value="ECO:0007669"/>
    <property type="project" value="UniProtKB-KW"/>
</dbReference>
<dbReference type="GO" id="GO:0071978">
    <property type="term" value="P:bacterial-type flagellum-dependent swarming motility"/>
    <property type="evidence" value="ECO:0000315"/>
    <property type="project" value="CACAO"/>
</dbReference>
<dbReference type="InterPro" id="IPR001444">
    <property type="entry name" value="Flag_bb_rod_N"/>
</dbReference>
<dbReference type="InterPro" id="IPR019776">
    <property type="entry name" value="Flagellar_basal_body_rod_CS"/>
</dbReference>
<dbReference type="InterPro" id="IPR010930">
    <property type="entry name" value="Flg_bb/hook_C_dom"/>
</dbReference>
<dbReference type="InterPro" id="IPR037925">
    <property type="entry name" value="FlgE/F/G-like"/>
</dbReference>
<dbReference type="PANTHER" id="PTHR30435:SF19">
    <property type="entry name" value="FLAGELLAR BASAL-BODY ROD PROTEIN FLGG"/>
    <property type="match status" value="1"/>
</dbReference>
<dbReference type="PANTHER" id="PTHR30435">
    <property type="entry name" value="FLAGELLAR PROTEIN"/>
    <property type="match status" value="1"/>
</dbReference>
<dbReference type="Pfam" id="PF00460">
    <property type="entry name" value="Flg_bb_rod"/>
    <property type="match status" value="1"/>
</dbReference>
<dbReference type="Pfam" id="PF06429">
    <property type="entry name" value="Flg_bbr_C"/>
    <property type="match status" value="1"/>
</dbReference>
<dbReference type="SUPFAM" id="SSF117143">
    <property type="entry name" value="Flagellar hook protein flgE"/>
    <property type="match status" value="1"/>
</dbReference>
<dbReference type="PROSITE" id="PS00588">
    <property type="entry name" value="FLAGELLA_BB_ROD"/>
    <property type="match status" value="1"/>
</dbReference>
<accession>P39752</accession>
<accession>P94581</accession>
<comment type="function">
    <text>Not required for motility.</text>
</comment>
<comment type="similarity">
    <text evidence="1">Belongs to the flagella basal body rod proteins family.</text>
</comment>
<evidence type="ECO:0000305" key="1"/>
<gene>
    <name type="primary">flhO</name>
    <name type="synonym">yvyA</name>
    <name type="ordered locus">BSU36400</name>
</gene>
<name>FLHO_BACSU</name>
<feature type="chain" id="PRO_0000180855" description="Flagellar hook-basal body complex protein FlhO">
    <location>
        <begin position="1"/>
        <end position="270"/>
    </location>
</feature>
<feature type="sequence conflict" description="In Ref. 1; AAA67879." evidence="1" ref="1">
    <original>A</original>
    <variation>R</variation>
    <location>
        <position position="211"/>
    </location>
</feature>
<feature type="sequence conflict" description="In Ref. 1." evidence="1" ref="1">
    <original>QGVSEL</original>
    <variation>TRRLRGF</variation>
    <location>
        <begin position="222"/>
        <end position="227"/>
    </location>
</feature>
<reference key="1">
    <citation type="journal article" date="1995" name="J. Bacteriol.">
        <title>Bacillus subtilis possesses a second determinant with extensive sequence similarity to the Escherichia coli mreB morphogene.</title>
        <authorList>
            <person name="Abhayawardhane Y."/>
            <person name="Stewart G.C."/>
        </authorList>
    </citation>
    <scope>NUCLEOTIDE SEQUENCE [GENOMIC DNA]</scope>
    <source>
        <strain>168</strain>
    </source>
</reference>
<reference key="2">
    <citation type="journal article" date="1997" name="Microbiology">
        <title>The Bacillus subtilis genome from gerBC (311 degrees) to licR (334 degrees).</title>
        <authorList>
            <person name="Presecan E."/>
            <person name="Moszer I."/>
            <person name="Boursier L."/>
            <person name="Cruz Ramos H."/>
            <person name="De La Fuente V."/>
            <person name="Hullo M.-F."/>
            <person name="Lelong C."/>
            <person name="Schleich S."/>
            <person name="Sekowska A."/>
            <person name="Song B.H."/>
            <person name="Villani G."/>
            <person name="Kunst F."/>
            <person name="Danchin A."/>
            <person name="Glaser P."/>
        </authorList>
    </citation>
    <scope>NUCLEOTIDE SEQUENCE [GENOMIC DNA]</scope>
    <source>
        <strain>168</strain>
    </source>
</reference>
<reference key="3">
    <citation type="journal article" date="1997" name="Nature">
        <title>The complete genome sequence of the Gram-positive bacterium Bacillus subtilis.</title>
        <authorList>
            <person name="Kunst F."/>
            <person name="Ogasawara N."/>
            <person name="Moszer I."/>
            <person name="Albertini A.M."/>
            <person name="Alloni G."/>
            <person name="Azevedo V."/>
            <person name="Bertero M.G."/>
            <person name="Bessieres P."/>
            <person name="Bolotin A."/>
            <person name="Borchert S."/>
            <person name="Borriss R."/>
            <person name="Boursier L."/>
            <person name="Brans A."/>
            <person name="Braun M."/>
            <person name="Brignell S.C."/>
            <person name="Bron S."/>
            <person name="Brouillet S."/>
            <person name="Bruschi C.V."/>
            <person name="Caldwell B."/>
            <person name="Capuano V."/>
            <person name="Carter N.M."/>
            <person name="Choi S.-K."/>
            <person name="Codani J.-J."/>
            <person name="Connerton I.F."/>
            <person name="Cummings N.J."/>
            <person name="Daniel R.A."/>
            <person name="Denizot F."/>
            <person name="Devine K.M."/>
            <person name="Duesterhoeft A."/>
            <person name="Ehrlich S.D."/>
            <person name="Emmerson P.T."/>
            <person name="Entian K.-D."/>
            <person name="Errington J."/>
            <person name="Fabret C."/>
            <person name="Ferrari E."/>
            <person name="Foulger D."/>
            <person name="Fritz C."/>
            <person name="Fujita M."/>
            <person name="Fujita Y."/>
            <person name="Fuma S."/>
            <person name="Galizzi A."/>
            <person name="Galleron N."/>
            <person name="Ghim S.-Y."/>
            <person name="Glaser P."/>
            <person name="Goffeau A."/>
            <person name="Golightly E.J."/>
            <person name="Grandi G."/>
            <person name="Guiseppi G."/>
            <person name="Guy B.J."/>
            <person name="Haga K."/>
            <person name="Haiech J."/>
            <person name="Harwood C.R."/>
            <person name="Henaut A."/>
            <person name="Hilbert H."/>
            <person name="Holsappel S."/>
            <person name="Hosono S."/>
            <person name="Hullo M.-F."/>
            <person name="Itaya M."/>
            <person name="Jones L.-M."/>
            <person name="Joris B."/>
            <person name="Karamata D."/>
            <person name="Kasahara Y."/>
            <person name="Klaerr-Blanchard M."/>
            <person name="Klein C."/>
            <person name="Kobayashi Y."/>
            <person name="Koetter P."/>
            <person name="Koningstein G."/>
            <person name="Krogh S."/>
            <person name="Kumano M."/>
            <person name="Kurita K."/>
            <person name="Lapidus A."/>
            <person name="Lardinois S."/>
            <person name="Lauber J."/>
            <person name="Lazarevic V."/>
            <person name="Lee S.-M."/>
            <person name="Levine A."/>
            <person name="Liu H."/>
            <person name="Masuda S."/>
            <person name="Mauel C."/>
            <person name="Medigue C."/>
            <person name="Medina N."/>
            <person name="Mellado R.P."/>
            <person name="Mizuno M."/>
            <person name="Moestl D."/>
            <person name="Nakai S."/>
            <person name="Noback M."/>
            <person name="Noone D."/>
            <person name="O'Reilly M."/>
            <person name="Ogawa K."/>
            <person name="Ogiwara A."/>
            <person name="Oudega B."/>
            <person name="Park S.-H."/>
            <person name="Parro V."/>
            <person name="Pohl T.M."/>
            <person name="Portetelle D."/>
            <person name="Porwollik S."/>
            <person name="Prescott A.M."/>
            <person name="Presecan E."/>
            <person name="Pujic P."/>
            <person name="Purnelle B."/>
            <person name="Rapoport G."/>
            <person name="Rey M."/>
            <person name="Reynolds S."/>
            <person name="Rieger M."/>
            <person name="Rivolta C."/>
            <person name="Rocha E."/>
            <person name="Roche B."/>
            <person name="Rose M."/>
            <person name="Sadaie Y."/>
            <person name="Sato T."/>
            <person name="Scanlan E."/>
            <person name="Schleich S."/>
            <person name="Schroeter R."/>
            <person name="Scoffone F."/>
            <person name="Sekiguchi J."/>
            <person name="Sekowska A."/>
            <person name="Seror S.J."/>
            <person name="Serror P."/>
            <person name="Shin B.-S."/>
            <person name="Soldo B."/>
            <person name="Sorokin A."/>
            <person name="Tacconi E."/>
            <person name="Takagi T."/>
            <person name="Takahashi H."/>
            <person name="Takemaru K."/>
            <person name="Takeuchi M."/>
            <person name="Tamakoshi A."/>
            <person name="Tanaka T."/>
            <person name="Terpstra P."/>
            <person name="Tognoni A."/>
            <person name="Tosato V."/>
            <person name="Uchiyama S."/>
            <person name="Vandenbol M."/>
            <person name="Vannier F."/>
            <person name="Vassarotti A."/>
            <person name="Viari A."/>
            <person name="Wambutt R."/>
            <person name="Wedler E."/>
            <person name="Wedler H."/>
            <person name="Weitzenegger T."/>
            <person name="Winters P."/>
            <person name="Wipat A."/>
            <person name="Yamamoto H."/>
            <person name="Yamane K."/>
            <person name="Yasumoto K."/>
            <person name="Yata K."/>
            <person name="Yoshida K."/>
            <person name="Yoshikawa H.-F."/>
            <person name="Zumstein E."/>
            <person name="Yoshikawa H."/>
            <person name="Danchin A."/>
        </authorList>
    </citation>
    <scope>NUCLEOTIDE SEQUENCE [LARGE SCALE GENOMIC DNA]</scope>
    <source>
        <strain>168</strain>
    </source>
</reference>
<protein>
    <recommendedName>
        <fullName>Flagellar hook-basal body complex protein FlhO</fullName>
    </recommendedName>
</protein>
<keyword id="KW-1005">Bacterial flagellum biogenesis</keyword>
<keyword id="KW-1185">Reference proteome</keyword>
<organism>
    <name type="scientific">Bacillus subtilis (strain 168)</name>
    <dbReference type="NCBI Taxonomy" id="224308"/>
    <lineage>
        <taxon>Bacteria</taxon>
        <taxon>Bacillati</taxon>
        <taxon>Bacillota</taxon>
        <taxon>Bacilli</taxon>
        <taxon>Bacillales</taxon>
        <taxon>Bacillaceae</taxon>
        <taxon>Bacillus</taxon>
    </lineage>
</organism>
<proteinExistence type="inferred from homology"/>
<sequence length="270" mass="29431">MLKGLYTATSAMIAQQRRTEMLSNNIANANTSGYKADQGSMRAFPEMLLSRIESKSPAGTSRTEIGSVNTGVYMQELKPLFTQGSLKSTDQPTDIALIENQVPMSAETNEKAALFYPVQTADGIRYSKSSTFSLNENNQLTINGRPILSTDRQPITVDNENFTVSENGTVTTNGRTAGQIDVRMAEDVRNLKRDGNDLYSTADGNDLPSAAGNNQVAYSLKQGVSELSNVDVTSAYTEMTEAYRSFEANQKVIQAYDKSMDKAANEIGKI</sequence>